<feature type="chain" id="PRO_0000185673" description="Testis-specific Y-encoded-like protein 4">
    <location>
        <begin position="1"/>
        <end position="414"/>
    </location>
</feature>
<feature type="region of interest" description="Disordered" evidence="1">
    <location>
        <begin position="1"/>
        <end position="129"/>
    </location>
</feature>
<feature type="region of interest" description="Disordered" evidence="1">
    <location>
        <begin position="391"/>
        <end position="414"/>
    </location>
</feature>
<feature type="compositionally biased region" description="Basic and acidic residues" evidence="1">
    <location>
        <begin position="24"/>
        <end position="40"/>
    </location>
</feature>
<feature type="compositionally biased region" description="Low complexity" evidence="1">
    <location>
        <begin position="101"/>
        <end position="112"/>
    </location>
</feature>
<feature type="sequence variant" id="VAR_050228" description="In dbSNP:rs2232470.">
    <original>R</original>
    <variation>L</variation>
    <location>
        <position position="30"/>
    </location>
</feature>
<evidence type="ECO:0000256" key="1">
    <source>
        <dbReference type="SAM" id="MobiDB-lite"/>
    </source>
</evidence>
<evidence type="ECO:0000305" key="2"/>
<reference key="1">
    <citation type="journal article" date="1998" name="DNA Res.">
        <title>Prediction of the coding sequences of unidentified human genes. XI. The complete sequences of 100 new cDNA clones from brain which code for large proteins in vitro.</title>
        <authorList>
            <person name="Nagase T."/>
            <person name="Ishikawa K."/>
            <person name="Suyama M."/>
            <person name="Kikuno R."/>
            <person name="Miyajima N."/>
            <person name="Tanaka A."/>
            <person name="Kotani H."/>
            <person name="Nomura N."/>
            <person name="Ohara O."/>
        </authorList>
    </citation>
    <scope>NUCLEOTIDE SEQUENCE [LARGE SCALE MRNA]</scope>
    <source>
        <tissue>Brain</tissue>
    </source>
</reference>
<reference key="2">
    <citation type="journal article" date="2004" name="Nat. Genet.">
        <title>Complete sequencing and characterization of 21,243 full-length human cDNAs.</title>
        <authorList>
            <person name="Ota T."/>
            <person name="Suzuki Y."/>
            <person name="Nishikawa T."/>
            <person name="Otsuki T."/>
            <person name="Sugiyama T."/>
            <person name="Irie R."/>
            <person name="Wakamatsu A."/>
            <person name="Hayashi K."/>
            <person name="Sato H."/>
            <person name="Nagai K."/>
            <person name="Kimura K."/>
            <person name="Makita H."/>
            <person name="Sekine M."/>
            <person name="Obayashi M."/>
            <person name="Nishi T."/>
            <person name="Shibahara T."/>
            <person name="Tanaka T."/>
            <person name="Ishii S."/>
            <person name="Yamamoto J."/>
            <person name="Saito K."/>
            <person name="Kawai Y."/>
            <person name="Isono Y."/>
            <person name="Nakamura Y."/>
            <person name="Nagahari K."/>
            <person name="Murakami K."/>
            <person name="Yasuda T."/>
            <person name="Iwayanagi T."/>
            <person name="Wagatsuma M."/>
            <person name="Shiratori A."/>
            <person name="Sudo H."/>
            <person name="Hosoiri T."/>
            <person name="Kaku Y."/>
            <person name="Kodaira H."/>
            <person name="Kondo H."/>
            <person name="Sugawara M."/>
            <person name="Takahashi M."/>
            <person name="Kanda K."/>
            <person name="Yokoi T."/>
            <person name="Furuya T."/>
            <person name="Kikkawa E."/>
            <person name="Omura Y."/>
            <person name="Abe K."/>
            <person name="Kamihara K."/>
            <person name="Katsuta N."/>
            <person name="Sato K."/>
            <person name="Tanikawa M."/>
            <person name="Yamazaki M."/>
            <person name="Ninomiya K."/>
            <person name="Ishibashi T."/>
            <person name="Yamashita H."/>
            <person name="Murakawa K."/>
            <person name="Fujimori K."/>
            <person name="Tanai H."/>
            <person name="Kimata M."/>
            <person name="Watanabe M."/>
            <person name="Hiraoka S."/>
            <person name="Chiba Y."/>
            <person name="Ishida S."/>
            <person name="Ono Y."/>
            <person name="Takiguchi S."/>
            <person name="Watanabe S."/>
            <person name="Yosida M."/>
            <person name="Hotuta T."/>
            <person name="Kusano J."/>
            <person name="Kanehori K."/>
            <person name="Takahashi-Fujii A."/>
            <person name="Hara H."/>
            <person name="Tanase T.-O."/>
            <person name="Nomura Y."/>
            <person name="Togiya S."/>
            <person name="Komai F."/>
            <person name="Hara R."/>
            <person name="Takeuchi K."/>
            <person name="Arita M."/>
            <person name="Imose N."/>
            <person name="Musashino K."/>
            <person name="Yuuki H."/>
            <person name="Oshima A."/>
            <person name="Sasaki N."/>
            <person name="Aotsuka S."/>
            <person name="Yoshikawa Y."/>
            <person name="Matsunawa H."/>
            <person name="Ichihara T."/>
            <person name="Shiohata N."/>
            <person name="Sano S."/>
            <person name="Moriya S."/>
            <person name="Momiyama H."/>
            <person name="Satoh N."/>
            <person name="Takami S."/>
            <person name="Terashima Y."/>
            <person name="Suzuki O."/>
            <person name="Nakagawa S."/>
            <person name="Senoh A."/>
            <person name="Mizoguchi H."/>
            <person name="Goto Y."/>
            <person name="Shimizu F."/>
            <person name="Wakebe H."/>
            <person name="Hishigaki H."/>
            <person name="Watanabe T."/>
            <person name="Sugiyama A."/>
            <person name="Takemoto M."/>
            <person name="Kawakami B."/>
            <person name="Yamazaki M."/>
            <person name="Watanabe K."/>
            <person name="Kumagai A."/>
            <person name="Itakura S."/>
            <person name="Fukuzumi Y."/>
            <person name="Fujimori Y."/>
            <person name="Komiyama M."/>
            <person name="Tashiro H."/>
            <person name="Tanigami A."/>
            <person name="Fujiwara T."/>
            <person name="Ono T."/>
            <person name="Yamada K."/>
            <person name="Fujii Y."/>
            <person name="Ozaki K."/>
            <person name="Hirao M."/>
            <person name="Ohmori Y."/>
            <person name="Kawabata A."/>
            <person name="Hikiji T."/>
            <person name="Kobatake N."/>
            <person name="Inagaki H."/>
            <person name="Ikema Y."/>
            <person name="Okamoto S."/>
            <person name="Okitani R."/>
            <person name="Kawakami T."/>
            <person name="Noguchi S."/>
            <person name="Itoh T."/>
            <person name="Shigeta K."/>
            <person name="Senba T."/>
            <person name="Matsumura K."/>
            <person name="Nakajima Y."/>
            <person name="Mizuno T."/>
            <person name="Morinaga M."/>
            <person name="Sasaki M."/>
            <person name="Togashi T."/>
            <person name="Oyama M."/>
            <person name="Hata H."/>
            <person name="Watanabe M."/>
            <person name="Komatsu T."/>
            <person name="Mizushima-Sugano J."/>
            <person name="Satoh T."/>
            <person name="Shirai Y."/>
            <person name="Takahashi Y."/>
            <person name="Nakagawa K."/>
            <person name="Okumura K."/>
            <person name="Nagase T."/>
            <person name="Nomura N."/>
            <person name="Kikuchi H."/>
            <person name="Masuho Y."/>
            <person name="Yamashita R."/>
            <person name="Nakai K."/>
            <person name="Yada T."/>
            <person name="Nakamura Y."/>
            <person name="Ohara O."/>
            <person name="Isogai T."/>
            <person name="Sugano S."/>
        </authorList>
    </citation>
    <scope>NUCLEOTIDE SEQUENCE [LARGE SCALE MRNA]</scope>
    <source>
        <tissue>Testis</tissue>
    </source>
</reference>
<reference key="3">
    <citation type="journal article" date="2003" name="Nature">
        <title>The DNA sequence and analysis of human chromosome 6.</title>
        <authorList>
            <person name="Mungall A.J."/>
            <person name="Palmer S.A."/>
            <person name="Sims S.K."/>
            <person name="Edwards C.A."/>
            <person name="Ashurst J.L."/>
            <person name="Wilming L."/>
            <person name="Jones M.C."/>
            <person name="Horton R."/>
            <person name="Hunt S.E."/>
            <person name="Scott C.E."/>
            <person name="Gilbert J.G.R."/>
            <person name="Clamp M.E."/>
            <person name="Bethel G."/>
            <person name="Milne S."/>
            <person name="Ainscough R."/>
            <person name="Almeida J.P."/>
            <person name="Ambrose K.D."/>
            <person name="Andrews T.D."/>
            <person name="Ashwell R.I.S."/>
            <person name="Babbage A.K."/>
            <person name="Bagguley C.L."/>
            <person name="Bailey J."/>
            <person name="Banerjee R."/>
            <person name="Barker D.J."/>
            <person name="Barlow K.F."/>
            <person name="Bates K."/>
            <person name="Beare D.M."/>
            <person name="Beasley H."/>
            <person name="Beasley O."/>
            <person name="Bird C.P."/>
            <person name="Blakey S.E."/>
            <person name="Bray-Allen S."/>
            <person name="Brook J."/>
            <person name="Brown A.J."/>
            <person name="Brown J.Y."/>
            <person name="Burford D.C."/>
            <person name="Burrill W."/>
            <person name="Burton J."/>
            <person name="Carder C."/>
            <person name="Carter N.P."/>
            <person name="Chapman J.C."/>
            <person name="Clark S.Y."/>
            <person name="Clark G."/>
            <person name="Clee C.M."/>
            <person name="Clegg S."/>
            <person name="Cobley V."/>
            <person name="Collier R.E."/>
            <person name="Collins J.E."/>
            <person name="Colman L.K."/>
            <person name="Corby N.R."/>
            <person name="Coville G.J."/>
            <person name="Culley K.M."/>
            <person name="Dhami P."/>
            <person name="Davies J."/>
            <person name="Dunn M."/>
            <person name="Earthrowl M.E."/>
            <person name="Ellington A.E."/>
            <person name="Evans K.A."/>
            <person name="Faulkner L."/>
            <person name="Francis M.D."/>
            <person name="Frankish A."/>
            <person name="Frankland J."/>
            <person name="French L."/>
            <person name="Garner P."/>
            <person name="Garnett J."/>
            <person name="Ghori M.J."/>
            <person name="Gilby L.M."/>
            <person name="Gillson C.J."/>
            <person name="Glithero R.J."/>
            <person name="Grafham D.V."/>
            <person name="Grant M."/>
            <person name="Gribble S."/>
            <person name="Griffiths C."/>
            <person name="Griffiths M.N.D."/>
            <person name="Hall R."/>
            <person name="Halls K.S."/>
            <person name="Hammond S."/>
            <person name="Harley J.L."/>
            <person name="Hart E.A."/>
            <person name="Heath P.D."/>
            <person name="Heathcott R."/>
            <person name="Holmes S.J."/>
            <person name="Howden P.J."/>
            <person name="Howe K.L."/>
            <person name="Howell G.R."/>
            <person name="Huckle E."/>
            <person name="Humphray S.J."/>
            <person name="Humphries M.D."/>
            <person name="Hunt A.R."/>
            <person name="Johnson C.M."/>
            <person name="Joy A.A."/>
            <person name="Kay M."/>
            <person name="Keenan S.J."/>
            <person name="Kimberley A.M."/>
            <person name="King A."/>
            <person name="Laird G.K."/>
            <person name="Langford C."/>
            <person name="Lawlor S."/>
            <person name="Leongamornlert D.A."/>
            <person name="Leversha M."/>
            <person name="Lloyd C.R."/>
            <person name="Lloyd D.M."/>
            <person name="Loveland J.E."/>
            <person name="Lovell J."/>
            <person name="Martin S."/>
            <person name="Mashreghi-Mohammadi M."/>
            <person name="Maslen G.L."/>
            <person name="Matthews L."/>
            <person name="McCann O.T."/>
            <person name="McLaren S.J."/>
            <person name="McLay K."/>
            <person name="McMurray A."/>
            <person name="Moore M.J.F."/>
            <person name="Mullikin J.C."/>
            <person name="Niblett D."/>
            <person name="Nickerson T."/>
            <person name="Novik K.L."/>
            <person name="Oliver K."/>
            <person name="Overton-Larty E.K."/>
            <person name="Parker A."/>
            <person name="Patel R."/>
            <person name="Pearce A.V."/>
            <person name="Peck A.I."/>
            <person name="Phillimore B.J.C.T."/>
            <person name="Phillips S."/>
            <person name="Plumb R.W."/>
            <person name="Porter K.M."/>
            <person name="Ramsey Y."/>
            <person name="Ranby S.A."/>
            <person name="Rice C.M."/>
            <person name="Ross M.T."/>
            <person name="Searle S.M."/>
            <person name="Sehra H.K."/>
            <person name="Sheridan E."/>
            <person name="Skuce C.D."/>
            <person name="Smith S."/>
            <person name="Smith M."/>
            <person name="Spraggon L."/>
            <person name="Squares S.L."/>
            <person name="Steward C.A."/>
            <person name="Sycamore N."/>
            <person name="Tamlyn-Hall G."/>
            <person name="Tester J."/>
            <person name="Theaker A.J."/>
            <person name="Thomas D.W."/>
            <person name="Thorpe A."/>
            <person name="Tracey A."/>
            <person name="Tromans A."/>
            <person name="Tubby B."/>
            <person name="Wall M."/>
            <person name="Wallis J.M."/>
            <person name="West A.P."/>
            <person name="White S.S."/>
            <person name="Whitehead S.L."/>
            <person name="Whittaker H."/>
            <person name="Wild A."/>
            <person name="Willey D.J."/>
            <person name="Wilmer T.E."/>
            <person name="Wood J.M."/>
            <person name="Wray P.W."/>
            <person name="Wyatt J.C."/>
            <person name="Young L."/>
            <person name="Younger R.M."/>
            <person name="Bentley D.R."/>
            <person name="Coulson A."/>
            <person name="Durbin R.M."/>
            <person name="Hubbard T."/>
            <person name="Sulston J.E."/>
            <person name="Dunham I."/>
            <person name="Rogers J."/>
            <person name="Beck S."/>
        </authorList>
    </citation>
    <scope>NUCLEOTIDE SEQUENCE [LARGE SCALE GENOMIC DNA]</scope>
</reference>
<reference key="4">
    <citation type="journal article" date="2004" name="Genome Res.">
        <title>The status, quality, and expansion of the NIH full-length cDNA project: the Mammalian Gene Collection (MGC).</title>
        <authorList>
            <consortium name="The MGC Project Team"/>
        </authorList>
    </citation>
    <scope>NUCLEOTIDE SEQUENCE [LARGE SCALE MRNA] OF 180-414</scope>
    <source>
        <tissue>Brain</tissue>
    </source>
</reference>
<accession>Q9UJ04</accession>
<accession>B4DYQ2</accession>
<accession>O94828</accession>
<accession>Q96GW8</accession>
<protein>
    <recommendedName>
        <fullName>Testis-specific Y-encoded-like protein 4</fullName>
        <shortName>TSPY-like protein 4</shortName>
    </recommendedName>
</protein>
<name>TSYL4_HUMAN</name>
<keyword id="KW-1267">Proteomics identification</keyword>
<keyword id="KW-1185">Reference proteome</keyword>
<organism>
    <name type="scientific">Homo sapiens</name>
    <name type="common">Human</name>
    <dbReference type="NCBI Taxonomy" id="9606"/>
    <lineage>
        <taxon>Eukaryota</taxon>
        <taxon>Metazoa</taxon>
        <taxon>Chordata</taxon>
        <taxon>Craniata</taxon>
        <taxon>Vertebrata</taxon>
        <taxon>Euteleostomi</taxon>
        <taxon>Mammalia</taxon>
        <taxon>Eutheria</taxon>
        <taxon>Euarchontoglires</taxon>
        <taxon>Primates</taxon>
        <taxon>Haplorrhini</taxon>
        <taxon>Catarrhini</taxon>
        <taxon>Hominidae</taxon>
        <taxon>Homo</taxon>
    </lineage>
</organism>
<gene>
    <name type="primary">TSPYL4</name>
    <name type="synonym">KIAA0721</name>
</gene>
<dbReference type="EMBL" id="AB018264">
    <property type="protein sequence ID" value="BAA34441.1"/>
    <property type="status" value="ALT_INIT"/>
    <property type="molecule type" value="mRNA"/>
</dbReference>
<dbReference type="EMBL" id="AK302542">
    <property type="protein sequence ID" value="BAG63814.1"/>
    <property type="molecule type" value="mRNA"/>
</dbReference>
<dbReference type="EMBL" id="AL050331">
    <property type="status" value="NOT_ANNOTATED_CDS"/>
    <property type="molecule type" value="Genomic_DNA"/>
</dbReference>
<dbReference type="EMBL" id="BC009116">
    <property type="protein sequence ID" value="AAH09116.2"/>
    <property type="molecule type" value="mRNA"/>
</dbReference>
<dbReference type="CCDS" id="CCDS5106.1"/>
<dbReference type="RefSeq" id="NP_067680.3">
    <property type="nucleotide sequence ID" value="NM_021648.4"/>
</dbReference>
<dbReference type="SMR" id="Q9UJ04"/>
<dbReference type="BioGRID" id="116871">
    <property type="interactions" value="36"/>
</dbReference>
<dbReference type="FunCoup" id="Q9UJ04">
    <property type="interactions" value="1133"/>
</dbReference>
<dbReference type="IntAct" id="Q9UJ04">
    <property type="interactions" value="39"/>
</dbReference>
<dbReference type="MINT" id="Q9UJ04"/>
<dbReference type="STRING" id="9606.ENSP00000410943"/>
<dbReference type="iPTMnet" id="Q9UJ04"/>
<dbReference type="PhosphoSitePlus" id="Q9UJ04"/>
<dbReference type="BioMuta" id="TSPYL4"/>
<dbReference type="DMDM" id="34098754"/>
<dbReference type="jPOST" id="Q9UJ04"/>
<dbReference type="MassIVE" id="Q9UJ04"/>
<dbReference type="PaxDb" id="9606-ENSP00000410943"/>
<dbReference type="PeptideAtlas" id="Q9UJ04"/>
<dbReference type="ProteomicsDB" id="84577"/>
<dbReference type="Pumba" id="Q9UJ04"/>
<dbReference type="Antibodypedia" id="32487">
    <property type="antibodies" value="132 antibodies from 20 providers"/>
</dbReference>
<dbReference type="DNASU" id="23270"/>
<dbReference type="Ensembl" id="ENST00000420283.3">
    <property type="protein sequence ID" value="ENSP00000410943.1"/>
    <property type="gene ID" value="ENSG00000187189.11"/>
</dbReference>
<dbReference type="GeneID" id="23270"/>
<dbReference type="KEGG" id="hsa:23270"/>
<dbReference type="MANE-Select" id="ENST00000420283.3">
    <property type="protein sequence ID" value="ENSP00000410943.1"/>
    <property type="RefSeq nucleotide sequence ID" value="NM_021648.5"/>
    <property type="RefSeq protein sequence ID" value="NP_067680.3"/>
</dbReference>
<dbReference type="UCSC" id="uc003pwn.4">
    <property type="organism name" value="human"/>
</dbReference>
<dbReference type="AGR" id="HGNC:21559"/>
<dbReference type="CTD" id="23270"/>
<dbReference type="DisGeNET" id="23270"/>
<dbReference type="GeneCards" id="TSPYL4"/>
<dbReference type="HGNC" id="HGNC:21559">
    <property type="gene designation" value="TSPYL4"/>
</dbReference>
<dbReference type="HPA" id="ENSG00000187189">
    <property type="expression patterns" value="Tissue enhanced (brain)"/>
</dbReference>
<dbReference type="MIM" id="619586">
    <property type="type" value="gene"/>
</dbReference>
<dbReference type="neXtProt" id="NX_Q9UJ04"/>
<dbReference type="OpenTargets" id="ENSG00000187189"/>
<dbReference type="PharmGKB" id="PA134942080"/>
<dbReference type="VEuPathDB" id="HostDB:ENSG00000187189"/>
<dbReference type="eggNOG" id="KOG1508">
    <property type="taxonomic scope" value="Eukaryota"/>
</dbReference>
<dbReference type="GeneTree" id="ENSGT00940000162991"/>
<dbReference type="HOGENOM" id="CLU_051687_2_0_1"/>
<dbReference type="InParanoid" id="Q9UJ04"/>
<dbReference type="OMA" id="NSQENGC"/>
<dbReference type="OrthoDB" id="19419at2759"/>
<dbReference type="PAN-GO" id="Q9UJ04">
    <property type="GO annotations" value="4 GO annotations based on evolutionary models"/>
</dbReference>
<dbReference type="PhylomeDB" id="Q9UJ04"/>
<dbReference type="TreeFam" id="TF313386"/>
<dbReference type="PathwayCommons" id="Q9UJ04"/>
<dbReference type="SignaLink" id="Q9UJ04"/>
<dbReference type="BioGRID-ORCS" id="23270">
    <property type="hits" value="9 hits in 1170 CRISPR screens"/>
</dbReference>
<dbReference type="GenomeRNAi" id="23270"/>
<dbReference type="Pharos" id="Q9UJ04">
    <property type="development level" value="Tdark"/>
</dbReference>
<dbReference type="PRO" id="PR:Q9UJ04"/>
<dbReference type="Proteomes" id="UP000005640">
    <property type="component" value="Chromosome 6"/>
</dbReference>
<dbReference type="RNAct" id="Q9UJ04">
    <property type="molecule type" value="protein"/>
</dbReference>
<dbReference type="Bgee" id="ENSG00000187189">
    <property type="expression patterns" value="Expressed in Brodmann (1909) area 23 and 202 other cell types or tissues"/>
</dbReference>
<dbReference type="GO" id="GO:0000785">
    <property type="term" value="C:chromatin"/>
    <property type="evidence" value="ECO:0000318"/>
    <property type="project" value="GO_Central"/>
</dbReference>
<dbReference type="GO" id="GO:0005634">
    <property type="term" value="C:nucleus"/>
    <property type="evidence" value="ECO:0000318"/>
    <property type="project" value="GO_Central"/>
</dbReference>
<dbReference type="GO" id="GO:0003682">
    <property type="term" value="F:chromatin binding"/>
    <property type="evidence" value="ECO:0000318"/>
    <property type="project" value="GO_Central"/>
</dbReference>
<dbReference type="GO" id="GO:0042393">
    <property type="term" value="F:histone binding"/>
    <property type="evidence" value="ECO:0000318"/>
    <property type="project" value="GO_Central"/>
</dbReference>
<dbReference type="GO" id="GO:0006334">
    <property type="term" value="P:nucleosome assembly"/>
    <property type="evidence" value="ECO:0007669"/>
    <property type="project" value="InterPro"/>
</dbReference>
<dbReference type="FunFam" id="3.30.1120.90:FF:000002">
    <property type="entry name" value="Testis-specific Y-encoded-like protein 2"/>
    <property type="match status" value="1"/>
</dbReference>
<dbReference type="Gene3D" id="1.20.5.1500">
    <property type="match status" value="1"/>
</dbReference>
<dbReference type="Gene3D" id="3.30.1120.90">
    <property type="entry name" value="Nucleosome assembly protein"/>
    <property type="match status" value="1"/>
</dbReference>
<dbReference type="InterPro" id="IPR037231">
    <property type="entry name" value="NAP-like_sf"/>
</dbReference>
<dbReference type="InterPro" id="IPR002164">
    <property type="entry name" value="NAP_family"/>
</dbReference>
<dbReference type="PANTHER" id="PTHR11875">
    <property type="entry name" value="TESTIS-SPECIFIC Y-ENCODED PROTEIN"/>
    <property type="match status" value="1"/>
</dbReference>
<dbReference type="Pfam" id="PF00956">
    <property type="entry name" value="NAP"/>
    <property type="match status" value="1"/>
</dbReference>
<dbReference type="SUPFAM" id="SSF143113">
    <property type="entry name" value="NAP-like"/>
    <property type="match status" value="1"/>
</dbReference>
<sequence>MSGLDGGNKLPLAQTGGLAAPDHASGDPDRDQCQGLREETEATQVMANTGGGSLETVAEGGASQDPVDCGPALRVPVAGSRGGAATKAGQEDAPPSTKGLEAASAAEAADSSQKNGCQLGEPRGPAGQKALEACGAGGLGSQMIPGKKAKEVTTKKRAISAAVEKEGEAGAAMEEKKVVQKEKKVAGGVKEETRPRAPKINNCMDSLEAIDQELSNVNAQADRAFLQLERKFGRMRRLHMQRRSFIIQNIPGFWVTAFRNHPQLSPMISGQDEDMLRYMINLEVEELKHPRAGCKFKFIFQGNPYFRNEGLVKEYERRSSGRVVSLSTPIRWHRGQDPQAHIHRNREGNTIPSFFNWFSDHSLLEFDRIAEIIKGELWPNPLQYYLMGEGPRRGIRGPPRQPVESARSFRFQSG</sequence>
<comment type="interaction">
    <interactant intactId="EBI-308511">
        <id>Q9UJ04</id>
    </interactant>
    <interactant intactId="EBI-718818">
        <id>Q96JB5</id>
        <label>CDK5RAP3</label>
    </interactant>
    <organismsDiffer>false</organismsDiffer>
    <experiments>6</experiments>
</comment>
<comment type="interaction">
    <interactant intactId="EBI-308511">
        <id>Q9UJ04</id>
    </interactant>
    <interactant intactId="EBI-11752486">
        <id>Q86XR8-3</id>
        <label>CEP57</label>
    </interactant>
    <organismsDiffer>false</organismsDiffer>
    <experiments>3</experiments>
</comment>
<comment type="interaction">
    <interactant intactId="EBI-308511">
        <id>Q9UJ04</id>
    </interactant>
    <interactant intactId="EBI-727171">
        <id>O00273</id>
        <label>DFFA</label>
    </interactant>
    <organismsDiffer>false</organismsDiffer>
    <experiments>2</experiments>
</comment>
<comment type="interaction">
    <interactant intactId="EBI-308511">
        <id>Q9UJ04</id>
    </interactant>
    <interactant intactId="EBI-5916454">
        <id>A6NEM1</id>
        <label>GOLGA6L9</label>
    </interactant>
    <organismsDiffer>false</organismsDiffer>
    <experiments>3</experiments>
</comment>
<comment type="interaction">
    <interactant intactId="EBI-308511">
        <id>Q9UJ04</id>
    </interactant>
    <interactant intactId="EBI-743122">
        <id>P43358</id>
        <label>MAGEA4</label>
    </interactant>
    <organismsDiffer>false</organismsDiffer>
    <experiments>8</experiments>
</comment>
<comment type="interaction">
    <interactant intactId="EBI-308511">
        <id>Q9UJ04</id>
    </interactant>
    <interactant intactId="EBI-10322170">
        <id>Q8IYV1</id>
        <label>NAP1L3</label>
    </interactant>
    <organismsDiffer>false</organismsDiffer>
    <experiments>3</experiments>
</comment>
<comment type="interaction">
    <interactant intactId="EBI-308511">
        <id>Q9UJ04</id>
    </interactant>
    <interactant intactId="EBI-302345">
        <id>Q8ND90</id>
        <label>PNMA1</label>
    </interactant>
    <organismsDiffer>false</organismsDiffer>
    <experiments>3</experiments>
</comment>
<comment type="interaction">
    <interactant intactId="EBI-308511">
        <id>Q9UJ04</id>
    </interactant>
    <interactant intactId="EBI-1105213">
        <id>Q9UBB9</id>
        <label>TFIP11</label>
    </interactant>
    <organismsDiffer>false</organismsDiffer>
    <experiments>3</experiments>
</comment>
<comment type="interaction">
    <interactant intactId="EBI-308511">
        <id>Q9UJ04</id>
    </interactant>
    <interactant intactId="EBI-12001016">
        <id>P07101-3</id>
        <label>TH</label>
    </interactant>
    <organismsDiffer>false</organismsDiffer>
    <experiments>3</experiments>
</comment>
<comment type="interaction">
    <interactant intactId="EBI-308511">
        <id>Q9UJ04</id>
    </interactant>
    <interactant intactId="EBI-2130415">
        <id>O00635</id>
        <label>TRIM38</label>
    </interactant>
    <organismsDiffer>false</organismsDiffer>
    <experiments>6</experiments>
</comment>
<comment type="interaction">
    <interactant intactId="EBI-308511">
        <id>Q9UJ04</id>
    </interactant>
    <interactant intactId="EBI-625509">
        <id>Q8N720</id>
        <label>ZNF655</label>
    </interactant>
    <organismsDiffer>false</organismsDiffer>
    <experiments>3</experiments>
</comment>
<comment type="interaction">
    <interactant intactId="EBI-308511">
        <id>Q9UJ04</id>
    </interactant>
    <interactant intactId="EBI-527853">
        <id>Q9UGI0</id>
        <label>ZRANB1</label>
    </interactant>
    <organismsDiffer>false</organismsDiffer>
    <experiments>3</experiments>
</comment>
<comment type="similarity">
    <text evidence="2">Belongs to the nucleosome assembly protein (NAP) family.</text>
</comment>
<comment type="sequence caution" evidence="2">
    <conflict type="erroneous initiation">
        <sequence resource="EMBL-CDS" id="BAA34441"/>
    </conflict>
</comment>
<proteinExistence type="evidence at protein level"/>